<gene>
    <name evidence="1" type="primary">rpsM</name>
    <name type="ordered locus">TGRD_106</name>
</gene>
<evidence type="ECO:0000255" key="1">
    <source>
        <dbReference type="HAMAP-Rule" id="MF_01315"/>
    </source>
</evidence>
<evidence type="ECO:0000256" key="2">
    <source>
        <dbReference type="SAM" id="MobiDB-lite"/>
    </source>
</evidence>
<evidence type="ECO:0000305" key="3"/>
<reference key="1">
    <citation type="journal article" date="2008" name="Proc. Natl. Acad. Sci. U.S.A.">
        <title>Complete genome of the uncultured termite group 1 bacteria in a single host protist cell.</title>
        <authorList>
            <person name="Hongoh Y."/>
            <person name="Sharma V.K."/>
            <person name="Prakash T."/>
            <person name="Noda S."/>
            <person name="Taylor T.D."/>
            <person name="Kudo T."/>
            <person name="Sakaki Y."/>
            <person name="Toyoda A."/>
            <person name="Hattori M."/>
            <person name="Ohkuma M."/>
        </authorList>
    </citation>
    <scope>NUCLEOTIDE SEQUENCE [LARGE SCALE GENOMIC DNA]</scope>
</reference>
<keyword id="KW-0687">Ribonucleoprotein</keyword>
<keyword id="KW-0689">Ribosomal protein</keyword>
<keyword id="KW-0694">RNA-binding</keyword>
<keyword id="KW-0699">rRNA-binding</keyword>
<keyword id="KW-0820">tRNA-binding</keyword>
<proteinExistence type="inferred from homology"/>
<dbReference type="EMBL" id="AP009510">
    <property type="protein sequence ID" value="BAG13589.1"/>
    <property type="molecule type" value="Genomic_DNA"/>
</dbReference>
<dbReference type="RefSeq" id="WP_015423118.1">
    <property type="nucleotide sequence ID" value="NC_020419.1"/>
</dbReference>
<dbReference type="SMR" id="B1GZA7"/>
<dbReference type="STRING" id="471821.TGRD_106"/>
<dbReference type="KEGG" id="eti:RSTT_091"/>
<dbReference type="KEGG" id="rsd:TGRD_106"/>
<dbReference type="PATRIC" id="fig|471821.5.peg.150"/>
<dbReference type="HOGENOM" id="CLU_103849_1_2_0"/>
<dbReference type="OrthoDB" id="9803610at2"/>
<dbReference type="Proteomes" id="UP000001691">
    <property type="component" value="Chromosome"/>
</dbReference>
<dbReference type="GO" id="GO:0005829">
    <property type="term" value="C:cytosol"/>
    <property type="evidence" value="ECO:0007669"/>
    <property type="project" value="TreeGrafter"/>
</dbReference>
<dbReference type="GO" id="GO:0015935">
    <property type="term" value="C:small ribosomal subunit"/>
    <property type="evidence" value="ECO:0007669"/>
    <property type="project" value="TreeGrafter"/>
</dbReference>
<dbReference type="GO" id="GO:0019843">
    <property type="term" value="F:rRNA binding"/>
    <property type="evidence" value="ECO:0007669"/>
    <property type="project" value="UniProtKB-UniRule"/>
</dbReference>
<dbReference type="GO" id="GO:0003735">
    <property type="term" value="F:structural constituent of ribosome"/>
    <property type="evidence" value="ECO:0007669"/>
    <property type="project" value="InterPro"/>
</dbReference>
<dbReference type="GO" id="GO:0000049">
    <property type="term" value="F:tRNA binding"/>
    <property type="evidence" value="ECO:0007669"/>
    <property type="project" value="UniProtKB-UniRule"/>
</dbReference>
<dbReference type="GO" id="GO:0006412">
    <property type="term" value="P:translation"/>
    <property type="evidence" value="ECO:0007669"/>
    <property type="project" value="UniProtKB-UniRule"/>
</dbReference>
<dbReference type="FunFam" id="1.10.8.50:FF:000001">
    <property type="entry name" value="30S ribosomal protein S13"/>
    <property type="match status" value="1"/>
</dbReference>
<dbReference type="FunFam" id="4.10.910.10:FF:000001">
    <property type="entry name" value="30S ribosomal protein S13"/>
    <property type="match status" value="1"/>
</dbReference>
<dbReference type="Gene3D" id="1.10.8.50">
    <property type="match status" value="1"/>
</dbReference>
<dbReference type="Gene3D" id="4.10.910.10">
    <property type="entry name" value="30s ribosomal protein s13, domain 2"/>
    <property type="match status" value="1"/>
</dbReference>
<dbReference type="HAMAP" id="MF_01315">
    <property type="entry name" value="Ribosomal_uS13"/>
    <property type="match status" value="1"/>
</dbReference>
<dbReference type="InterPro" id="IPR027437">
    <property type="entry name" value="Rbsml_uS13_C"/>
</dbReference>
<dbReference type="InterPro" id="IPR001892">
    <property type="entry name" value="Ribosomal_uS13"/>
</dbReference>
<dbReference type="InterPro" id="IPR010979">
    <property type="entry name" value="Ribosomal_uS13-like_H2TH"/>
</dbReference>
<dbReference type="InterPro" id="IPR019980">
    <property type="entry name" value="Ribosomal_uS13_bac-type"/>
</dbReference>
<dbReference type="InterPro" id="IPR018269">
    <property type="entry name" value="Ribosomal_uS13_CS"/>
</dbReference>
<dbReference type="NCBIfam" id="TIGR03631">
    <property type="entry name" value="uS13_bact"/>
    <property type="match status" value="1"/>
</dbReference>
<dbReference type="PANTHER" id="PTHR10871">
    <property type="entry name" value="30S RIBOSOMAL PROTEIN S13/40S RIBOSOMAL PROTEIN S18"/>
    <property type="match status" value="1"/>
</dbReference>
<dbReference type="PANTHER" id="PTHR10871:SF1">
    <property type="entry name" value="SMALL RIBOSOMAL SUBUNIT PROTEIN US13M"/>
    <property type="match status" value="1"/>
</dbReference>
<dbReference type="Pfam" id="PF00416">
    <property type="entry name" value="Ribosomal_S13"/>
    <property type="match status" value="1"/>
</dbReference>
<dbReference type="PIRSF" id="PIRSF002134">
    <property type="entry name" value="Ribosomal_S13"/>
    <property type="match status" value="1"/>
</dbReference>
<dbReference type="SUPFAM" id="SSF46946">
    <property type="entry name" value="S13-like H2TH domain"/>
    <property type="match status" value="1"/>
</dbReference>
<dbReference type="PROSITE" id="PS00646">
    <property type="entry name" value="RIBOSOMAL_S13_1"/>
    <property type="match status" value="1"/>
</dbReference>
<dbReference type="PROSITE" id="PS50159">
    <property type="entry name" value="RIBOSOMAL_S13_2"/>
    <property type="match status" value="1"/>
</dbReference>
<sequence>MARVAGIDLPNNKRLDIALRYIYGIGPAISDEIIKELSLNPAKRVKDLTEEEVGRINNLITKNLKVEGDLRREVQSNIKRLIEIRSYRGLRHRRNLPVRGQRTKTNARTRRGKRKTVGAGKSTSSIKRVK</sequence>
<accession>B1GZA7</accession>
<protein>
    <recommendedName>
        <fullName evidence="1">Small ribosomal subunit protein uS13</fullName>
    </recommendedName>
    <alternativeName>
        <fullName evidence="3">30S ribosomal protein S13</fullName>
    </alternativeName>
</protein>
<comment type="function">
    <text evidence="1">Located at the top of the head of the 30S subunit, it contacts several helices of the 16S rRNA. In the 70S ribosome it contacts the 23S rRNA (bridge B1a) and protein L5 of the 50S subunit (bridge B1b), connecting the 2 subunits; these bridges are implicated in subunit movement. Contacts the tRNAs in the A and P-sites.</text>
</comment>
<comment type="subunit">
    <text evidence="1">Part of the 30S ribosomal subunit. Forms a loose heterodimer with protein S19. Forms two bridges to the 50S subunit in the 70S ribosome.</text>
</comment>
<comment type="similarity">
    <text evidence="1">Belongs to the universal ribosomal protein uS13 family.</text>
</comment>
<feature type="chain" id="PRO_1000141326" description="Small ribosomal subunit protein uS13">
    <location>
        <begin position="1"/>
        <end position="130"/>
    </location>
</feature>
<feature type="region of interest" description="Disordered" evidence="2">
    <location>
        <begin position="97"/>
        <end position="130"/>
    </location>
</feature>
<feature type="compositionally biased region" description="Basic residues" evidence="2">
    <location>
        <begin position="97"/>
        <end position="116"/>
    </location>
</feature>
<feature type="compositionally biased region" description="Polar residues" evidence="2">
    <location>
        <begin position="121"/>
        <end position="130"/>
    </location>
</feature>
<name>RS13_ENDTX</name>
<organism>
    <name type="scientific">Endomicrobium trichonymphae</name>
    <dbReference type="NCBI Taxonomy" id="1408204"/>
    <lineage>
        <taxon>Bacteria</taxon>
        <taxon>Pseudomonadati</taxon>
        <taxon>Elusimicrobiota</taxon>
        <taxon>Endomicrobiia</taxon>
        <taxon>Endomicrobiales</taxon>
        <taxon>Endomicrobiaceae</taxon>
        <taxon>Candidatus Endomicrobiellum</taxon>
    </lineage>
</organism>